<protein>
    <recommendedName>
        <fullName evidence="1">Lon protease</fullName>
        <ecNumber evidence="1">3.4.21.53</ecNumber>
    </recommendedName>
    <alternativeName>
        <fullName evidence="1">ATP-dependent protease La</fullName>
    </alternativeName>
</protein>
<organism>
    <name type="scientific">Aster yellows witches'-broom phytoplasma (strain AYWB)</name>
    <dbReference type="NCBI Taxonomy" id="322098"/>
    <lineage>
        <taxon>Bacteria</taxon>
        <taxon>Bacillati</taxon>
        <taxon>Mycoplasmatota</taxon>
        <taxon>Mollicutes</taxon>
        <taxon>Acholeplasmatales</taxon>
        <taxon>Acholeplasmataceae</taxon>
        <taxon>Candidatus Phytoplasma</taxon>
        <taxon>16SrI (Aster yellows group)</taxon>
    </lineage>
</organism>
<proteinExistence type="inferred from homology"/>
<comment type="function">
    <text evidence="1">ATP-dependent serine protease that mediates the selective degradation of mutant and abnormal proteins as well as certain short-lived regulatory proteins. Required for cellular homeostasis and for survival from DNA damage and developmental changes induced by stress. Degrades polypeptides processively to yield small peptide fragments that are 5 to 10 amino acids long. Binds to DNA in a double-stranded, site-specific manner.</text>
</comment>
<comment type="catalytic activity">
    <reaction evidence="1">
        <text>Hydrolysis of proteins in presence of ATP.</text>
        <dbReference type="EC" id="3.4.21.53"/>
    </reaction>
</comment>
<comment type="subunit">
    <text evidence="1">Homohexamer. Organized in a ring with a central cavity.</text>
</comment>
<comment type="subcellular location">
    <subcellularLocation>
        <location evidence="1">Cytoplasm</location>
    </subcellularLocation>
</comment>
<comment type="induction">
    <text evidence="1">By heat shock.</text>
</comment>
<comment type="similarity">
    <text evidence="1">Belongs to the peptidase S16 family.</text>
</comment>
<feature type="chain" id="PRO_0000396534" description="Lon protease">
    <location>
        <begin position="1"/>
        <end position="791"/>
    </location>
</feature>
<feature type="domain" description="Lon N-terminal" evidence="3">
    <location>
        <begin position="28"/>
        <end position="223"/>
    </location>
</feature>
<feature type="domain" description="Lon proteolytic" evidence="2">
    <location>
        <begin position="610"/>
        <end position="791"/>
    </location>
</feature>
<feature type="active site" evidence="1">
    <location>
        <position position="697"/>
    </location>
</feature>
<feature type="active site" evidence="1">
    <location>
        <position position="740"/>
    </location>
</feature>
<feature type="binding site" evidence="1">
    <location>
        <begin position="374"/>
        <end position="381"/>
    </location>
    <ligand>
        <name>ATP</name>
        <dbReference type="ChEBI" id="CHEBI:30616"/>
    </ligand>
</feature>
<dbReference type="EC" id="3.4.21.53" evidence="1"/>
<dbReference type="EMBL" id="CP000061">
    <property type="protein sequence ID" value="ABC65450.1"/>
    <property type="molecule type" value="Genomic_DNA"/>
</dbReference>
<dbReference type="RefSeq" id="WP_011412614.1">
    <property type="nucleotide sequence ID" value="NC_007716.1"/>
</dbReference>
<dbReference type="SMR" id="Q2NJE3"/>
<dbReference type="STRING" id="322098.AYWB_333"/>
<dbReference type="MEROPS" id="S16.001"/>
<dbReference type="KEGG" id="ayw:AYWB_333"/>
<dbReference type="eggNOG" id="COG0466">
    <property type="taxonomic scope" value="Bacteria"/>
</dbReference>
<dbReference type="HOGENOM" id="CLU_004109_4_3_14"/>
<dbReference type="OrthoDB" id="9803599at2"/>
<dbReference type="PhylomeDB" id="Q2NJE3"/>
<dbReference type="Proteomes" id="UP000001934">
    <property type="component" value="Chromosome"/>
</dbReference>
<dbReference type="GO" id="GO:0005737">
    <property type="term" value="C:cytoplasm"/>
    <property type="evidence" value="ECO:0007669"/>
    <property type="project" value="UniProtKB-SubCell"/>
</dbReference>
<dbReference type="GO" id="GO:0005524">
    <property type="term" value="F:ATP binding"/>
    <property type="evidence" value="ECO:0007669"/>
    <property type="project" value="UniProtKB-UniRule"/>
</dbReference>
<dbReference type="GO" id="GO:0016887">
    <property type="term" value="F:ATP hydrolysis activity"/>
    <property type="evidence" value="ECO:0007669"/>
    <property type="project" value="UniProtKB-UniRule"/>
</dbReference>
<dbReference type="GO" id="GO:0004176">
    <property type="term" value="F:ATP-dependent peptidase activity"/>
    <property type="evidence" value="ECO:0007669"/>
    <property type="project" value="UniProtKB-UniRule"/>
</dbReference>
<dbReference type="GO" id="GO:0043565">
    <property type="term" value="F:sequence-specific DNA binding"/>
    <property type="evidence" value="ECO:0007669"/>
    <property type="project" value="UniProtKB-UniRule"/>
</dbReference>
<dbReference type="GO" id="GO:0004252">
    <property type="term" value="F:serine-type endopeptidase activity"/>
    <property type="evidence" value="ECO:0007669"/>
    <property type="project" value="UniProtKB-UniRule"/>
</dbReference>
<dbReference type="GO" id="GO:0034605">
    <property type="term" value="P:cellular response to heat"/>
    <property type="evidence" value="ECO:0007669"/>
    <property type="project" value="UniProtKB-UniRule"/>
</dbReference>
<dbReference type="GO" id="GO:0006515">
    <property type="term" value="P:protein quality control for misfolded or incompletely synthesized proteins"/>
    <property type="evidence" value="ECO:0007669"/>
    <property type="project" value="UniProtKB-UniRule"/>
</dbReference>
<dbReference type="CDD" id="cd19500">
    <property type="entry name" value="RecA-like_Lon"/>
    <property type="match status" value="1"/>
</dbReference>
<dbReference type="FunFam" id="3.40.50.300:FF:000021">
    <property type="entry name" value="Lon protease homolog"/>
    <property type="match status" value="1"/>
</dbReference>
<dbReference type="Gene3D" id="1.10.8.60">
    <property type="match status" value="1"/>
</dbReference>
<dbReference type="Gene3D" id="1.20.5.5270">
    <property type="match status" value="1"/>
</dbReference>
<dbReference type="Gene3D" id="1.20.58.1480">
    <property type="match status" value="1"/>
</dbReference>
<dbReference type="Gene3D" id="3.30.230.10">
    <property type="match status" value="1"/>
</dbReference>
<dbReference type="Gene3D" id="2.30.130.40">
    <property type="entry name" value="LON domain-like"/>
    <property type="match status" value="1"/>
</dbReference>
<dbReference type="Gene3D" id="3.40.50.300">
    <property type="entry name" value="P-loop containing nucleotide triphosphate hydrolases"/>
    <property type="match status" value="1"/>
</dbReference>
<dbReference type="HAMAP" id="MF_01973">
    <property type="entry name" value="lon_bact"/>
    <property type="match status" value="1"/>
</dbReference>
<dbReference type="InterPro" id="IPR003593">
    <property type="entry name" value="AAA+_ATPase"/>
</dbReference>
<dbReference type="InterPro" id="IPR003959">
    <property type="entry name" value="ATPase_AAA_core"/>
</dbReference>
<dbReference type="InterPro" id="IPR027543">
    <property type="entry name" value="Lon_bac"/>
</dbReference>
<dbReference type="InterPro" id="IPR004815">
    <property type="entry name" value="Lon_bac/euk-typ"/>
</dbReference>
<dbReference type="InterPro" id="IPR054594">
    <property type="entry name" value="Lon_lid"/>
</dbReference>
<dbReference type="InterPro" id="IPR008269">
    <property type="entry name" value="Lon_proteolytic"/>
</dbReference>
<dbReference type="InterPro" id="IPR027065">
    <property type="entry name" value="Lon_Prtase"/>
</dbReference>
<dbReference type="InterPro" id="IPR003111">
    <property type="entry name" value="Lon_prtase_N"/>
</dbReference>
<dbReference type="InterPro" id="IPR046336">
    <property type="entry name" value="Lon_prtase_N_sf"/>
</dbReference>
<dbReference type="InterPro" id="IPR027417">
    <property type="entry name" value="P-loop_NTPase"/>
</dbReference>
<dbReference type="InterPro" id="IPR008268">
    <property type="entry name" value="Peptidase_S16_AS"/>
</dbReference>
<dbReference type="InterPro" id="IPR015947">
    <property type="entry name" value="PUA-like_sf"/>
</dbReference>
<dbReference type="InterPro" id="IPR020568">
    <property type="entry name" value="Ribosomal_Su5_D2-typ_SF"/>
</dbReference>
<dbReference type="InterPro" id="IPR014721">
    <property type="entry name" value="Ribsml_uS5_D2-typ_fold_subgr"/>
</dbReference>
<dbReference type="NCBIfam" id="TIGR00763">
    <property type="entry name" value="lon"/>
    <property type="match status" value="1"/>
</dbReference>
<dbReference type="PANTHER" id="PTHR10046">
    <property type="entry name" value="ATP DEPENDENT LON PROTEASE FAMILY MEMBER"/>
    <property type="match status" value="1"/>
</dbReference>
<dbReference type="Pfam" id="PF00004">
    <property type="entry name" value="AAA"/>
    <property type="match status" value="1"/>
</dbReference>
<dbReference type="Pfam" id="PF05362">
    <property type="entry name" value="Lon_C"/>
    <property type="match status" value="1"/>
</dbReference>
<dbReference type="Pfam" id="PF22667">
    <property type="entry name" value="Lon_lid"/>
    <property type="match status" value="1"/>
</dbReference>
<dbReference type="Pfam" id="PF02190">
    <property type="entry name" value="LON_substr_bdg"/>
    <property type="match status" value="1"/>
</dbReference>
<dbReference type="PIRSF" id="PIRSF001174">
    <property type="entry name" value="Lon_proteas"/>
    <property type="match status" value="1"/>
</dbReference>
<dbReference type="PRINTS" id="PR00830">
    <property type="entry name" value="ENDOLAPTASE"/>
</dbReference>
<dbReference type="SMART" id="SM00382">
    <property type="entry name" value="AAA"/>
    <property type="match status" value="1"/>
</dbReference>
<dbReference type="SMART" id="SM00464">
    <property type="entry name" value="LON"/>
    <property type="match status" value="1"/>
</dbReference>
<dbReference type="SUPFAM" id="SSF52540">
    <property type="entry name" value="P-loop containing nucleoside triphosphate hydrolases"/>
    <property type="match status" value="1"/>
</dbReference>
<dbReference type="SUPFAM" id="SSF88697">
    <property type="entry name" value="PUA domain-like"/>
    <property type="match status" value="1"/>
</dbReference>
<dbReference type="SUPFAM" id="SSF54211">
    <property type="entry name" value="Ribosomal protein S5 domain 2-like"/>
    <property type="match status" value="1"/>
</dbReference>
<dbReference type="PROSITE" id="PS51787">
    <property type="entry name" value="LON_N"/>
    <property type="match status" value="1"/>
</dbReference>
<dbReference type="PROSITE" id="PS51786">
    <property type="entry name" value="LON_PROTEOLYTIC"/>
    <property type="match status" value="1"/>
</dbReference>
<dbReference type="PROSITE" id="PS01046">
    <property type="entry name" value="LON_SER"/>
    <property type="match status" value="1"/>
</dbReference>
<evidence type="ECO:0000255" key="1">
    <source>
        <dbReference type="HAMAP-Rule" id="MF_01973"/>
    </source>
</evidence>
<evidence type="ECO:0000255" key="2">
    <source>
        <dbReference type="PROSITE-ProRule" id="PRU01122"/>
    </source>
</evidence>
<evidence type="ECO:0000255" key="3">
    <source>
        <dbReference type="PROSITE-ProRule" id="PRU01123"/>
    </source>
</evidence>
<gene>
    <name evidence="1" type="primary">lon</name>
    <name type="ordered locus">AYWB_333</name>
</gene>
<name>LON_AYWBP</name>
<reference key="1">
    <citation type="journal article" date="2006" name="J. Bacteriol.">
        <title>Living with genome instability: the adaptation of phytoplasmas to diverse environments of their insect and plant hosts.</title>
        <authorList>
            <person name="Bai X."/>
            <person name="Zhang J."/>
            <person name="Ewing A."/>
            <person name="Miller S.A."/>
            <person name="Jancso Radek A."/>
            <person name="Shevchenko D.V."/>
            <person name="Tsukerman K."/>
            <person name="Walunas T."/>
            <person name="Lapidus A."/>
            <person name="Campbell J.W."/>
            <person name="Hogenhout S.A."/>
        </authorList>
    </citation>
    <scope>NUCLEOTIDE SEQUENCE [LARGE SCALE GENOMIC DNA]</scope>
    <source>
        <strain>AYWB</strain>
    </source>
</reference>
<accession>Q2NJE3</accession>
<keyword id="KW-0067">ATP-binding</keyword>
<keyword id="KW-0963">Cytoplasm</keyword>
<keyword id="KW-0378">Hydrolase</keyword>
<keyword id="KW-0547">Nucleotide-binding</keyword>
<keyword id="KW-0645">Protease</keyword>
<keyword id="KW-0720">Serine protease</keyword>
<keyword id="KW-0346">Stress response</keyword>
<sequence length="791" mass="89748">MKTKSKKLKSDLSIGEFEDIFQEIPEQLPVVVISEIMPIPNVDFRIEVSDNSYLKALKESETNANSFVILLTQKGLSHNKPKLTNLQRYGVLAQIITKVKIPHGDFKVRFRILQRVKIDKFLQKEPFLKVSYEKVKTVYGSIEEEKALIKLVIEKIMDKPFQLLVQNTNNFLDIIKTEPETENITDIIIFNLKIDDLDKYKYLKESHLNKRIFYILQDIQSLLIGLDLEQKINEKVKQSIDENQKEFYLREKMKAIQLELGDKAKKEEEIAELRDKIKKTPLPPEIKKKALQELSRYQTSSLMAESFVIKNYLDFLLELPWGKTSQDENDLVAIEKSLNNQHYGLQKVKERILEYAAVKIMTKKNPQNILCLVGPPGVGKTSLASSIAKALGRQFVRQSLGGLKEESEIRGHRRTYIGAMPGRILAGIRDAKTVNPVFLLDEIDKLVTNYNFDPASALLEVLDPQQNINFMDHFLSEPFDLSQVLFIATANYLDNVPEALKDRMEIIEVSSYTEKDKINIASKYLLKKQLKNHGITDTNLVIDNDTILYLIRHYTKEAGVRELDRILAELARKTVKECLIKKKEQVIITTKNVTKYLGKEKYLNLLDEQKEKIGSTNGLAYTYFGGDLLPVEVTYYKGKGQLVLTGKLGEVLKESAYTALSFIKANCQNLGIDANIFAENDFHIHLPEAAIPKDGPSAGITIATSLVSAITQKYIKKGLGMTGEITLRGNILAIGGLKEKAIAANRSGLDTIFIPQENLKDIEDIPEEVRNKLNIIPVSNISDVFSQVFVV</sequence>